<name>RL3_NOVAD</name>
<accession>Q2G8Y0</accession>
<sequence length="251" mass="26996">MRTGVIAKKVGMTRLFQEDGRHVPVTVLSLENCQVVSVRTAERDGYVALQLGAGEAKQKNVAKPQREHFAKAEVPLKMEVAEFRVADDALLDVGSTIAASHFVPGQYVDITGQTQGKGFQGAMKRWGFGGMRATHGVSISHRAHGSTGNRQDPGRVFKNKKMAGHMGDRQRTQQNLEVVRTDDERGLIFVKGSVPGSKNAWLLVRDAVKVSRHAEAPYPAGLKQAANSNDSAAADTPAEVAAVEATEGQEG</sequence>
<organism>
    <name type="scientific">Novosphingobium aromaticivorans (strain ATCC 700278 / DSM 12444 / CCUG 56034 / CIP 105152 / NBRC 16084 / F199)</name>
    <dbReference type="NCBI Taxonomy" id="279238"/>
    <lineage>
        <taxon>Bacteria</taxon>
        <taxon>Pseudomonadati</taxon>
        <taxon>Pseudomonadota</taxon>
        <taxon>Alphaproteobacteria</taxon>
        <taxon>Sphingomonadales</taxon>
        <taxon>Sphingomonadaceae</taxon>
        <taxon>Novosphingobium</taxon>
    </lineage>
</organism>
<comment type="function">
    <text evidence="1">One of the primary rRNA binding proteins, it binds directly near the 3'-end of the 23S rRNA, where it nucleates assembly of the 50S subunit.</text>
</comment>
<comment type="subunit">
    <text evidence="1">Part of the 50S ribosomal subunit. Forms a cluster with proteins L14 and L19.</text>
</comment>
<comment type="PTM">
    <text evidence="1">Methylated by PrmB.</text>
</comment>
<comment type="similarity">
    <text evidence="1">Belongs to the universal ribosomal protein uL3 family.</text>
</comment>
<evidence type="ECO:0000255" key="1">
    <source>
        <dbReference type="HAMAP-Rule" id="MF_01325"/>
    </source>
</evidence>
<evidence type="ECO:0000256" key="2">
    <source>
        <dbReference type="SAM" id="MobiDB-lite"/>
    </source>
</evidence>
<evidence type="ECO:0000305" key="3"/>
<feature type="chain" id="PRO_0000241379" description="Large ribosomal subunit protein uL3">
    <location>
        <begin position="1"/>
        <end position="251"/>
    </location>
</feature>
<feature type="region of interest" description="Disordered" evidence="2">
    <location>
        <begin position="221"/>
        <end position="251"/>
    </location>
</feature>
<feature type="compositionally biased region" description="Low complexity" evidence="2">
    <location>
        <begin position="225"/>
        <end position="251"/>
    </location>
</feature>
<feature type="modified residue" description="N5-methylglutamine" evidence="1">
    <location>
        <position position="151"/>
    </location>
</feature>
<protein>
    <recommendedName>
        <fullName evidence="1">Large ribosomal subunit protein uL3</fullName>
    </recommendedName>
    <alternativeName>
        <fullName evidence="3">50S ribosomal protein L3</fullName>
    </alternativeName>
</protein>
<reference key="1">
    <citation type="submission" date="2006-01" db="EMBL/GenBank/DDBJ databases">
        <title>Complete sequence of Novosphingobium aromaticivorans DSM 12444.</title>
        <authorList>
            <consortium name="US DOE Joint Genome Institute"/>
            <person name="Copeland A."/>
            <person name="Lucas S."/>
            <person name="Lapidus A."/>
            <person name="Barry K."/>
            <person name="Detter J.C."/>
            <person name="Glavina T."/>
            <person name="Hammon N."/>
            <person name="Israni S."/>
            <person name="Pitluck S."/>
            <person name="Chain P."/>
            <person name="Malfatti S."/>
            <person name="Shin M."/>
            <person name="Vergez L."/>
            <person name="Schmutz J."/>
            <person name="Larimer F."/>
            <person name="Land M."/>
            <person name="Kyrpides N."/>
            <person name="Ivanova N."/>
            <person name="Fredrickson J."/>
            <person name="Balkwill D."/>
            <person name="Romine M.F."/>
            <person name="Richardson P."/>
        </authorList>
    </citation>
    <scope>NUCLEOTIDE SEQUENCE [LARGE SCALE GENOMIC DNA]</scope>
    <source>
        <strain>ATCC 700278 / DSM 12444 / CCUG 56034 / CIP 105152 / NBRC 16084 / F199</strain>
    </source>
</reference>
<keyword id="KW-0488">Methylation</keyword>
<keyword id="KW-1185">Reference proteome</keyword>
<keyword id="KW-0687">Ribonucleoprotein</keyword>
<keyword id="KW-0689">Ribosomal protein</keyword>
<keyword id="KW-0694">RNA-binding</keyword>
<keyword id="KW-0699">rRNA-binding</keyword>
<gene>
    <name evidence="1" type="primary">rplC</name>
    <name type="ordered locus">Saro_1249</name>
</gene>
<proteinExistence type="inferred from homology"/>
<dbReference type="EMBL" id="CP000248">
    <property type="protein sequence ID" value="ABD25693.1"/>
    <property type="molecule type" value="Genomic_DNA"/>
</dbReference>
<dbReference type="RefSeq" id="WP_011444907.1">
    <property type="nucleotide sequence ID" value="NC_007794.1"/>
</dbReference>
<dbReference type="SMR" id="Q2G8Y0"/>
<dbReference type="STRING" id="279238.Saro_1249"/>
<dbReference type="KEGG" id="nar:Saro_1249"/>
<dbReference type="eggNOG" id="COG0087">
    <property type="taxonomic scope" value="Bacteria"/>
</dbReference>
<dbReference type="HOGENOM" id="CLU_044142_2_0_5"/>
<dbReference type="Proteomes" id="UP000009134">
    <property type="component" value="Chromosome"/>
</dbReference>
<dbReference type="GO" id="GO:0022625">
    <property type="term" value="C:cytosolic large ribosomal subunit"/>
    <property type="evidence" value="ECO:0007669"/>
    <property type="project" value="TreeGrafter"/>
</dbReference>
<dbReference type="GO" id="GO:0019843">
    <property type="term" value="F:rRNA binding"/>
    <property type="evidence" value="ECO:0007669"/>
    <property type="project" value="UniProtKB-UniRule"/>
</dbReference>
<dbReference type="GO" id="GO:0003735">
    <property type="term" value="F:structural constituent of ribosome"/>
    <property type="evidence" value="ECO:0007669"/>
    <property type="project" value="InterPro"/>
</dbReference>
<dbReference type="GO" id="GO:0006412">
    <property type="term" value="P:translation"/>
    <property type="evidence" value="ECO:0007669"/>
    <property type="project" value="UniProtKB-UniRule"/>
</dbReference>
<dbReference type="FunFam" id="2.40.30.10:FF:000004">
    <property type="entry name" value="50S ribosomal protein L3"/>
    <property type="match status" value="1"/>
</dbReference>
<dbReference type="FunFam" id="3.30.160.810:FF:000001">
    <property type="entry name" value="50S ribosomal protein L3"/>
    <property type="match status" value="1"/>
</dbReference>
<dbReference type="Gene3D" id="3.30.160.810">
    <property type="match status" value="1"/>
</dbReference>
<dbReference type="Gene3D" id="2.40.30.10">
    <property type="entry name" value="Translation factors"/>
    <property type="match status" value="1"/>
</dbReference>
<dbReference type="HAMAP" id="MF_01325_B">
    <property type="entry name" value="Ribosomal_uL3_B"/>
    <property type="match status" value="1"/>
</dbReference>
<dbReference type="InterPro" id="IPR000597">
    <property type="entry name" value="Ribosomal_uL3"/>
</dbReference>
<dbReference type="InterPro" id="IPR019927">
    <property type="entry name" value="Ribosomal_uL3_bac/org-type"/>
</dbReference>
<dbReference type="InterPro" id="IPR019926">
    <property type="entry name" value="Ribosomal_uL3_CS"/>
</dbReference>
<dbReference type="InterPro" id="IPR009000">
    <property type="entry name" value="Transl_B-barrel_sf"/>
</dbReference>
<dbReference type="NCBIfam" id="TIGR03625">
    <property type="entry name" value="L3_bact"/>
    <property type="match status" value="1"/>
</dbReference>
<dbReference type="PANTHER" id="PTHR11229">
    <property type="entry name" value="50S RIBOSOMAL PROTEIN L3"/>
    <property type="match status" value="1"/>
</dbReference>
<dbReference type="PANTHER" id="PTHR11229:SF16">
    <property type="entry name" value="LARGE RIBOSOMAL SUBUNIT PROTEIN UL3C"/>
    <property type="match status" value="1"/>
</dbReference>
<dbReference type="Pfam" id="PF00297">
    <property type="entry name" value="Ribosomal_L3"/>
    <property type="match status" value="1"/>
</dbReference>
<dbReference type="SUPFAM" id="SSF50447">
    <property type="entry name" value="Translation proteins"/>
    <property type="match status" value="1"/>
</dbReference>
<dbReference type="PROSITE" id="PS00474">
    <property type="entry name" value="RIBOSOMAL_L3"/>
    <property type="match status" value="1"/>
</dbReference>